<comment type="PTM">
    <text evidence="1">The N-terminus is cleaved by ribosomal processing cysteine protease Prp.</text>
</comment>
<comment type="similarity">
    <text evidence="2">Belongs to the bacterial ribosomal protein bL27 family.</text>
</comment>
<gene>
    <name evidence="2" type="primary">rpmA</name>
    <name type="ordered locus">Teth39_1433</name>
</gene>
<proteinExistence type="inferred from homology"/>
<dbReference type="EMBL" id="CP000924">
    <property type="protein sequence ID" value="ABY95083.1"/>
    <property type="molecule type" value="Genomic_DNA"/>
</dbReference>
<dbReference type="RefSeq" id="WP_003868116.1">
    <property type="nucleotide sequence ID" value="NC_010321.1"/>
</dbReference>
<dbReference type="SMR" id="B0KAC0"/>
<dbReference type="STRING" id="340099.Teth39_1433"/>
<dbReference type="KEGG" id="tpd:Teth39_1433"/>
<dbReference type="eggNOG" id="COG0211">
    <property type="taxonomic scope" value="Bacteria"/>
</dbReference>
<dbReference type="HOGENOM" id="CLU_095424_4_0_9"/>
<dbReference type="Proteomes" id="UP000002156">
    <property type="component" value="Chromosome"/>
</dbReference>
<dbReference type="GO" id="GO:0022625">
    <property type="term" value="C:cytosolic large ribosomal subunit"/>
    <property type="evidence" value="ECO:0007669"/>
    <property type="project" value="TreeGrafter"/>
</dbReference>
<dbReference type="GO" id="GO:0003735">
    <property type="term" value="F:structural constituent of ribosome"/>
    <property type="evidence" value="ECO:0007669"/>
    <property type="project" value="InterPro"/>
</dbReference>
<dbReference type="GO" id="GO:0006412">
    <property type="term" value="P:translation"/>
    <property type="evidence" value="ECO:0007669"/>
    <property type="project" value="UniProtKB-UniRule"/>
</dbReference>
<dbReference type="FunFam" id="2.40.50.100:FF:000004">
    <property type="entry name" value="50S ribosomal protein L27"/>
    <property type="match status" value="1"/>
</dbReference>
<dbReference type="Gene3D" id="2.40.50.100">
    <property type="match status" value="1"/>
</dbReference>
<dbReference type="HAMAP" id="MF_00539">
    <property type="entry name" value="Ribosomal_bL27"/>
    <property type="match status" value="1"/>
</dbReference>
<dbReference type="InterPro" id="IPR001684">
    <property type="entry name" value="Ribosomal_bL27"/>
</dbReference>
<dbReference type="InterPro" id="IPR018261">
    <property type="entry name" value="Ribosomal_bL27_CS"/>
</dbReference>
<dbReference type="NCBIfam" id="TIGR00062">
    <property type="entry name" value="L27"/>
    <property type="match status" value="1"/>
</dbReference>
<dbReference type="PANTHER" id="PTHR15893:SF0">
    <property type="entry name" value="LARGE RIBOSOMAL SUBUNIT PROTEIN BL27M"/>
    <property type="match status" value="1"/>
</dbReference>
<dbReference type="PANTHER" id="PTHR15893">
    <property type="entry name" value="RIBOSOMAL PROTEIN L27"/>
    <property type="match status" value="1"/>
</dbReference>
<dbReference type="Pfam" id="PF01016">
    <property type="entry name" value="Ribosomal_L27"/>
    <property type="match status" value="1"/>
</dbReference>
<dbReference type="PRINTS" id="PR00063">
    <property type="entry name" value="RIBOSOMALL27"/>
</dbReference>
<dbReference type="SUPFAM" id="SSF110324">
    <property type="entry name" value="Ribosomal L27 protein-like"/>
    <property type="match status" value="1"/>
</dbReference>
<dbReference type="PROSITE" id="PS00831">
    <property type="entry name" value="RIBOSOMAL_L27"/>
    <property type="match status" value="1"/>
</dbReference>
<name>RL27_THEP3</name>
<organism>
    <name type="scientific">Thermoanaerobacter pseudethanolicus (strain ATCC 33223 / 39E)</name>
    <name type="common">Clostridium thermohydrosulfuricum</name>
    <dbReference type="NCBI Taxonomy" id="340099"/>
    <lineage>
        <taxon>Bacteria</taxon>
        <taxon>Bacillati</taxon>
        <taxon>Bacillota</taxon>
        <taxon>Clostridia</taxon>
        <taxon>Thermoanaerobacterales</taxon>
        <taxon>Thermoanaerobacteraceae</taxon>
        <taxon>Thermoanaerobacter</taxon>
    </lineage>
</organism>
<evidence type="ECO:0000250" key="1">
    <source>
        <dbReference type="UniProtKB" id="Q2FXT0"/>
    </source>
</evidence>
<evidence type="ECO:0000255" key="2">
    <source>
        <dbReference type="HAMAP-Rule" id="MF_00539"/>
    </source>
</evidence>
<evidence type="ECO:0000256" key="3">
    <source>
        <dbReference type="SAM" id="MobiDB-lite"/>
    </source>
</evidence>
<evidence type="ECO:0000305" key="4"/>
<sequence length="95" mass="10553">MKLQLFAHKKGVGSSRNGRDSESKRLGVKRADGQFVLAGNILVRQRGTKIHPGVNVGKGKDDTLFALIDGYVTFERKGRDKKQVSVYPERKVAQN</sequence>
<reference key="1">
    <citation type="submission" date="2008-01" db="EMBL/GenBank/DDBJ databases">
        <title>Complete sequence of Thermoanaerobacter pseudethanolicus 39E.</title>
        <authorList>
            <person name="Copeland A."/>
            <person name="Lucas S."/>
            <person name="Lapidus A."/>
            <person name="Barry K."/>
            <person name="Glavina del Rio T."/>
            <person name="Dalin E."/>
            <person name="Tice H."/>
            <person name="Pitluck S."/>
            <person name="Bruce D."/>
            <person name="Goodwin L."/>
            <person name="Saunders E."/>
            <person name="Brettin T."/>
            <person name="Detter J.C."/>
            <person name="Han C."/>
            <person name="Schmutz J."/>
            <person name="Larimer F."/>
            <person name="Land M."/>
            <person name="Hauser L."/>
            <person name="Kyrpides N."/>
            <person name="Lykidis A."/>
            <person name="Hemme C."/>
            <person name="Fields M.W."/>
            <person name="He Z."/>
            <person name="Zhou J."/>
            <person name="Richardson P."/>
        </authorList>
    </citation>
    <scope>NUCLEOTIDE SEQUENCE [LARGE SCALE GENOMIC DNA]</scope>
    <source>
        <strain>ATCC 33223 / DSM 2355 / 39E</strain>
    </source>
</reference>
<feature type="propeptide" id="PRO_0000459974" evidence="1">
    <location>
        <begin position="1"/>
        <end position="6"/>
    </location>
</feature>
<feature type="chain" id="PRO_1000128819" description="Large ribosomal subunit protein bL27">
    <location>
        <begin position="7"/>
        <end position="95"/>
    </location>
</feature>
<feature type="region of interest" description="Disordered" evidence="3">
    <location>
        <begin position="1"/>
        <end position="25"/>
    </location>
</feature>
<keyword id="KW-1185">Reference proteome</keyword>
<keyword id="KW-0687">Ribonucleoprotein</keyword>
<keyword id="KW-0689">Ribosomal protein</keyword>
<accession>B0KAC0</accession>
<protein>
    <recommendedName>
        <fullName evidence="2">Large ribosomal subunit protein bL27</fullName>
    </recommendedName>
    <alternativeName>
        <fullName evidence="4">50S ribosomal protein L27</fullName>
    </alternativeName>
</protein>